<protein>
    <recommendedName>
        <fullName>Ribonuclease HIII</fullName>
        <shortName>RNase HIII</shortName>
        <ecNumber>3.1.26.4</ecNumber>
    </recommendedName>
</protein>
<accession>O84011</accession>
<reference key="1">
    <citation type="journal article" date="1998" name="Science">
        <title>Genome sequence of an obligate intracellular pathogen of humans: Chlamydia trachomatis.</title>
        <authorList>
            <person name="Stephens R.S."/>
            <person name="Kalman S."/>
            <person name="Lammel C.J."/>
            <person name="Fan J."/>
            <person name="Marathe R."/>
            <person name="Aravind L."/>
            <person name="Mitchell W.P."/>
            <person name="Olinger L."/>
            <person name="Tatusov R.L."/>
            <person name="Zhao Q."/>
            <person name="Koonin E.V."/>
            <person name="Davis R.W."/>
        </authorList>
    </citation>
    <scope>NUCLEOTIDE SEQUENCE [LARGE SCALE GENOMIC DNA]</scope>
    <source>
        <strain>ATCC VR-885 / DSM 19411 / UW-3/Cx</strain>
    </source>
</reference>
<comment type="function">
    <text evidence="1">Endonuclease that specifically degrades the RNA of RNA-DNA hybrids.</text>
</comment>
<comment type="catalytic activity">
    <reaction>
        <text>Endonucleolytic cleavage to 5'-phosphomonoester.</text>
        <dbReference type="EC" id="3.1.26.4"/>
    </reaction>
</comment>
<comment type="cofactor">
    <cofactor evidence="1">
        <name>Mn(2+)</name>
        <dbReference type="ChEBI" id="CHEBI:29035"/>
    </cofactor>
    <cofactor evidence="1">
        <name>Mg(2+)</name>
        <dbReference type="ChEBI" id="CHEBI:18420"/>
    </cofactor>
    <text evidence="1">Manganese or magnesium. Binds 1 divalent metal ion per monomer in the absence of substrate. May bind a second metal ion after substrate binding.</text>
</comment>
<comment type="subcellular location">
    <subcellularLocation>
        <location evidence="3">Cytoplasm</location>
    </subcellularLocation>
</comment>
<comment type="similarity">
    <text evidence="3">Belongs to the RNase HII family. RnhC subfamily.</text>
</comment>
<name>RNH3_CHLTR</name>
<evidence type="ECO:0000250" key="1"/>
<evidence type="ECO:0000255" key="2">
    <source>
        <dbReference type="PROSITE-ProRule" id="PRU01319"/>
    </source>
</evidence>
<evidence type="ECO:0000305" key="3"/>
<sequence>MPSSFVSQLSPSLFSILREQLEKKGFTISIPPHTVFQGRSPTVSCTVYQSGKIVVQGKGTQEFVEFFLEPEILQTFSSQNVQQDLRSRIGVDESGKGDFFGPLCTAGVYASSPQAIEALYKTSICDSKLIPDAKILSLAQNIRSLCACKVITLFPEKYNALYANFQNLNSLLAWTHATIIDNLAPHPAGAVFAISDQFASSERVLLQAVRKKCSDIELIQRHRAEQDVVVAAASILAREAFLSSIHALESQYQIRLLKGASGKVKQRAKEILHNKGQVVLEKVCKTHFKTFNEVLGSGNQ</sequence>
<feature type="chain" id="PRO_0000111685" description="Ribonuclease HIII">
    <location>
        <begin position="1"/>
        <end position="300"/>
    </location>
</feature>
<feature type="domain" description="RNase H type-2" evidence="2">
    <location>
        <begin position="86"/>
        <end position="300"/>
    </location>
</feature>
<feature type="binding site" evidence="1">
    <location>
        <position position="92"/>
    </location>
    <ligand>
        <name>a divalent metal cation</name>
        <dbReference type="ChEBI" id="CHEBI:60240"/>
    </ligand>
</feature>
<feature type="binding site" evidence="1">
    <location>
        <position position="93"/>
    </location>
    <ligand>
        <name>a divalent metal cation</name>
        <dbReference type="ChEBI" id="CHEBI:60240"/>
    </ligand>
</feature>
<feature type="binding site" evidence="1">
    <location>
        <position position="196"/>
    </location>
    <ligand>
        <name>a divalent metal cation</name>
        <dbReference type="ChEBI" id="CHEBI:60240"/>
    </ligand>
</feature>
<keyword id="KW-0963">Cytoplasm</keyword>
<keyword id="KW-0255">Endonuclease</keyword>
<keyword id="KW-0378">Hydrolase</keyword>
<keyword id="KW-0460">Magnesium</keyword>
<keyword id="KW-0479">Metal-binding</keyword>
<keyword id="KW-0540">Nuclease</keyword>
<keyword id="KW-1185">Reference proteome</keyword>
<gene>
    <name type="primary">rnhC</name>
    <name type="ordered locus">CT_008</name>
</gene>
<proteinExistence type="inferred from homology"/>
<dbReference type="EC" id="3.1.26.4"/>
<dbReference type="EMBL" id="AE001273">
    <property type="protein sequence ID" value="AAC67598.1"/>
    <property type="molecule type" value="Genomic_DNA"/>
</dbReference>
<dbReference type="PIR" id="C71569">
    <property type="entry name" value="C71569"/>
</dbReference>
<dbReference type="RefSeq" id="WP_009871354.1">
    <property type="nucleotide sequence ID" value="NC_000117.1"/>
</dbReference>
<dbReference type="SMR" id="O84011"/>
<dbReference type="FunCoup" id="O84011">
    <property type="interactions" value="8"/>
</dbReference>
<dbReference type="STRING" id="272561.CT_008"/>
<dbReference type="EnsemblBacteria" id="AAC67598">
    <property type="protein sequence ID" value="AAC67598"/>
    <property type="gene ID" value="CT_008"/>
</dbReference>
<dbReference type="KEGG" id="ctr:CT_008"/>
<dbReference type="PATRIC" id="fig|272561.5.peg.10"/>
<dbReference type="HOGENOM" id="CLU_059546_0_0_0"/>
<dbReference type="InParanoid" id="O84011"/>
<dbReference type="OrthoDB" id="9777935at2"/>
<dbReference type="Proteomes" id="UP000000431">
    <property type="component" value="Chromosome"/>
</dbReference>
<dbReference type="GO" id="GO:0005737">
    <property type="term" value="C:cytoplasm"/>
    <property type="evidence" value="ECO:0007669"/>
    <property type="project" value="UniProtKB-SubCell"/>
</dbReference>
<dbReference type="GO" id="GO:0032299">
    <property type="term" value="C:ribonuclease H2 complex"/>
    <property type="evidence" value="ECO:0000318"/>
    <property type="project" value="GO_Central"/>
</dbReference>
<dbReference type="GO" id="GO:0000287">
    <property type="term" value="F:magnesium ion binding"/>
    <property type="evidence" value="ECO:0007669"/>
    <property type="project" value="UniProtKB-UniRule"/>
</dbReference>
<dbReference type="GO" id="GO:0003723">
    <property type="term" value="F:RNA binding"/>
    <property type="evidence" value="ECO:0007669"/>
    <property type="project" value="InterPro"/>
</dbReference>
<dbReference type="GO" id="GO:0004523">
    <property type="term" value="F:RNA-DNA hybrid ribonuclease activity"/>
    <property type="evidence" value="ECO:0000318"/>
    <property type="project" value="GO_Central"/>
</dbReference>
<dbReference type="GO" id="GO:0043137">
    <property type="term" value="P:DNA replication, removal of RNA primer"/>
    <property type="evidence" value="ECO:0000318"/>
    <property type="project" value="GO_Central"/>
</dbReference>
<dbReference type="GO" id="GO:0006298">
    <property type="term" value="P:mismatch repair"/>
    <property type="evidence" value="ECO:0000318"/>
    <property type="project" value="GO_Central"/>
</dbReference>
<dbReference type="CDD" id="cd06590">
    <property type="entry name" value="RNase_HII_bacteria_HIII_like"/>
    <property type="match status" value="1"/>
</dbReference>
<dbReference type="CDD" id="cd14796">
    <property type="entry name" value="RNAse_HIII_N"/>
    <property type="match status" value="1"/>
</dbReference>
<dbReference type="FunFam" id="3.30.310.10:FF:000032">
    <property type="entry name" value="Ribonuclease HIII"/>
    <property type="match status" value="1"/>
</dbReference>
<dbReference type="Gene3D" id="3.30.420.10">
    <property type="entry name" value="Ribonuclease H-like superfamily/Ribonuclease H"/>
    <property type="match status" value="1"/>
</dbReference>
<dbReference type="Gene3D" id="3.30.310.10">
    <property type="entry name" value="TATA-Binding Protein"/>
    <property type="match status" value="1"/>
</dbReference>
<dbReference type="HAMAP" id="MF_00053">
    <property type="entry name" value="RNase_HIII"/>
    <property type="match status" value="1"/>
</dbReference>
<dbReference type="InterPro" id="IPR001352">
    <property type="entry name" value="RNase_HII/HIII"/>
</dbReference>
<dbReference type="InterPro" id="IPR024567">
    <property type="entry name" value="RNase_HII/HIII_dom"/>
</dbReference>
<dbReference type="InterPro" id="IPR004641">
    <property type="entry name" value="RNase_HIII"/>
</dbReference>
<dbReference type="InterPro" id="IPR024568">
    <property type="entry name" value="RNase_HIII_N"/>
</dbReference>
<dbReference type="InterPro" id="IPR012337">
    <property type="entry name" value="RNaseH-like_sf"/>
</dbReference>
<dbReference type="InterPro" id="IPR036397">
    <property type="entry name" value="RNaseH_sf"/>
</dbReference>
<dbReference type="InterPro" id="IPR012295">
    <property type="entry name" value="TBP_dom_sf"/>
</dbReference>
<dbReference type="NCBIfam" id="TIGR00716">
    <property type="entry name" value="rnhC"/>
    <property type="match status" value="1"/>
</dbReference>
<dbReference type="PANTHER" id="PTHR10954:SF23">
    <property type="entry name" value="RIBONUCLEASE"/>
    <property type="match status" value="1"/>
</dbReference>
<dbReference type="PANTHER" id="PTHR10954">
    <property type="entry name" value="RIBONUCLEASE H2 SUBUNIT A"/>
    <property type="match status" value="1"/>
</dbReference>
<dbReference type="Pfam" id="PF11858">
    <property type="entry name" value="DUF3378"/>
    <property type="match status" value="1"/>
</dbReference>
<dbReference type="Pfam" id="PF01351">
    <property type="entry name" value="RNase_HII"/>
    <property type="match status" value="1"/>
</dbReference>
<dbReference type="PIRSF" id="PIRSF037748">
    <property type="entry name" value="RnhC"/>
    <property type="match status" value="1"/>
</dbReference>
<dbReference type="SUPFAM" id="SSF53098">
    <property type="entry name" value="Ribonuclease H-like"/>
    <property type="match status" value="1"/>
</dbReference>
<dbReference type="PROSITE" id="PS51975">
    <property type="entry name" value="RNASE_H_2"/>
    <property type="match status" value="1"/>
</dbReference>
<organism>
    <name type="scientific">Chlamydia trachomatis serovar D (strain ATCC VR-885 / DSM 19411 / UW-3/Cx)</name>
    <dbReference type="NCBI Taxonomy" id="272561"/>
    <lineage>
        <taxon>Bacteria</taxon>
        <taxon>Pseudomonadati</taxon>
        <taxon>Chlamydiota</taxon>
        <taxon>Chlamydiia</taxon>
        <taxon>Chlamydiales</taxon>
        <taxon>Chlamydiaceae</taxon>
        <taxon>Chlamydia/Chlamydophila group</taxon>
        <taxon>Chlamydia</taxon>
    </lineage>
</organism>